<keyword id="KW-0007">Acetylation</keyword>
<keyword id="KW-0249">Electron transport</keyword>
<keyword id="KW-0274">FAD</keyword>
<keyword id="KW-0285">Flavoprotein</keyword>
<keyword id="KW-0472">Membrane</keyword>
<keyword id="KW-0496">Mitochondrion</keyword>
<keyword id="KW-0999">Mitochondrion inner membrane</keyword>
<keyword id="KW-0560">Oxidoreductase</keyword>
<keyword id="KW-0597">Phosphoprotein</keyword>
<keyword id="KW-1185">Reference proteome</keyword>
<keyword id="KW-0809">Transit peptide</keyword>
<keyword id="KW-0813">Transport</keyword>
<keyword id="KW-0816">Tricarboxylic acid cycle</keyword>
<keyword id="KW-0043">Tumor suppressor</keyword>
<comment type="function">
    <text evidence="1 2">Flavoprotein (FP) subunit of succinate dehydrogenase (SDH) that is involved in complex II of the mitochondrial electron transport chain and is responsible for transferring electrons from succinate to ubiquinone (coenzyme Q) (By similarity). SDH also oxidizes malate to the non-canonical enol form of oxaloacetate, enol-oxaloacetate. Enol-oxaloacetate, which is a potent inhibitor of the succinate dehydrogenase activity, is further isomerized into keto-oxaloacetate (By similarity). Can act as a tumor suppressor (By similarity).</text>
</comment>
<comment type="catalytic activity">
    <reaction evidence="2">
        <text>a ubiquinone + succinate = a ubiquinol + fumarate</text>
        <dbReference type="Rhea" id="RHEA:13713"/>
        <dbReference type="Rhea" id="RHEA-COMP:9565"/>
        <dbReference type="Rhea" id="RHEA-COMP:9566"/>
        <dbReference type="ChEBI" id="CHEBI:16389"/>
        <dbReference type="ChEBI" id="CHEBI:17976"/>
        <dbReference type="ChEBI" id="CHEBI:29806"/>
        <dbReference type="ChEBI" id="CHEBI:30031"/>
        <dbReference type="EC" id="1.3.5.1"/>
    </reaction>
</comment>
<comment type="catalytic activity">
    <reaction evidence="2">
        <text>a quinone + succinate = fumarate + a quinol</text>
        <dbReference type="Rhea" id="RHEA:40523"/>
        <dbReference type="ChEBI" id="CHEBI:24646"/>
        <dbReference type="ChEBI" id="CHEBI:29806"/>
        <dbReference type="ChEBI" id="CHEBI:30031"/>
        <dbReference type="ChEBI" id="CHEBI:132124"/>
        <dbReference type="EC" id="1.3.5.1"/>
    </reaction>
</comment>
<comment type="catalytic activity">
    <reaction evidence="1">
        <text>(R)-malate + a quinone = enol-oxaloacetate + a quinol</text>
        <dbReference type="Rhea" id="RHEA:79827"/>
        <dbReference type="ChEBI" id="CHEBI:15588"/>
        <dbReference type="ChEBI" id="CHEBI:17479"/>
        <dbReference type="ChEBI" id="CHEBI:24646"/>
        <dbReference type="ChEBI" id="CHEBI:132124"/>
    </reaction>
    <physiologicalReaction direction="left-to-right" evidence="1">
        <dbReference type="Rhea" id="RHEA:79828"/>
    </physiologicalReaction>
</comment>
<comment type="catalytic activity">
    <reaction evidence="1">
        <text>(S)-malate + a quinone = enol-oxaloacetate + a quinol</text>
        <dbReference type="Rhea" id="RHEA:79831"/>
        <dbReference type="ChEBI" id="CHEBI:15589"/>
        <dbReference type="ChEBI" id="CHEBI:17479"/>
        <dbReference type="ChEBI" id="CHEBI:24646"/>
        <dbReference type="ChEBI" id="CHEBI:132124"/>
    </reaction>
    <physiologicalReaction direction="left-to-right" evidence="1">
        <dbReference type="Rhea" id="RHEA:79832"/>
    </physiologicalReaction>
</comment>
<comment type="cofactor">
    <cofactor evidence="3">
        <name>FAD</name>
        <dbReference type="ChEBI" id="CHEBI:57692"/>
    </cofactor>
</comment>
<comment type="activity regulation">
    <text evidence="1">Enol-oxaloacetate inhibits the succinate dehydrogenase activity.</text>
</comment>
<comment type="pathway">
    <text evidence="2">Carbohydrate metabolism; tricarboxylic acid cycle; fumarate from succinate (eukaryal route): step 1/1.</text>
</comment>
<comment type="subunit">
    <text evidence="2 3">Component of complex II composed of four subunits: the flavoprotein (FP) SDHA, iron-sulfur protein (IP) SDHB, and a cytochrome b560 composed of SDHC and SDHD (By similarity). Interacts with SDHAF2/SDH5; interaction is required for FAD attachment (By similarity). Interacts with TRAP1 (By similarity). Interacts with LACC1 (By similarity).</text>
</comment>
<comment type="subcellular location">
    <subcellularLocation>
        <location evidence="3">Mitochondrion inner membrane</location>
        <topology evidence="3">Peripheral membrane protein</topology>
        <orientation evidence="3">Matrix side</orientation>
    </subcellularLocation>
</comment>
<comment type="PTM">
    <text evidence="2">Phosphorylation at Tyr-215 is important for efficient electron transfer in complex II and the prevention of ROS generation.</text>
</comment>
<comment type="PTM">
    <text evidence="4">Acetylated. Deacetylated by SIRT3.</text>
</comment>
<comment type="similarity">
    <text evidence="6">Belongs to the FAD-dependent oxidoreductase 2 family. FRD/SDH subfamily.</text>
</comment>
<name>SDHA_MACFA</name>
<sequence>MSGVRRLSRLLSTRRLALAKAWPAVLQTGTRGFHFTVDGNKRASAKVSDSISAQYPVVDHEFDAVVVGAGGAGLRAAFGLSEAGFNTACVTKLFPTRSHTVAAQGGINAALGNMEEDNWRWHFYDTVKGSDWLGDQDAIHYMTEQAPAAVVELENYGMPFSRTEDGKIYQRAFGGQSLKFGKGGQAHRCCCVADRTGHSLLHTLYGRSLRYDTSYFVEYFALDLLMENRECRGVIALCIEDGSIHRIRAKNTVVATGGYGRTYFSCTSAHTSTGDGTAMITRAGLPCQDLEFVQFHPTGIYGAGCLITEGCRGEGGILINSQGERFMERYAPVAKDLASRDVVSRSMTLEIREGRGCGPEKDHVYLQLHHLPPEQLATRLPGISETAMIFAGVDVTKEPIPVLPTVHYNMGGIPTNYKGQVLRHVNGQDQIVPGLYACGEAACASVHGANRLGANSLWDLVVFGRACALSIEESCRPGDKVPPIKPNAGEESVMNLDKLRFADGSIRTSELRLSMQKSMQNHAAVFRVGSVLQEGCGKISKLYGDLKHLKTFDRGMVWNTDLVETLELQNLMLCALQTIYGAEARKESRGAHAREDYKARIDEYDYSKPIQGQQKKPFEEHWRKHTLSYVDVSTGKVTLEYRPVIDKTLNEADCATVPPAIRSY</sequence>
<organism>
    <name type="scientific">Macaca fascicularis</name>
    <name type="common">Crab-eating macaque</name>
    <name type="synonym">Cynomolgus monkey</name>
    <dbReference type="NCBI Taxonomy" id="9541"/>
    <lineage>
        <taxon>Eukaryota</taxon>
        <taxon>Metazoa</taxon>
        <taxon>Chordata</taxon>
        <taxon>Craniata</taxon>
        <taxon>Vertebrata</taxon>
        <taxon>Euteleostomi</taxon>
        <taxon>Mammalia</taxon>
        <taxon>Eutheria</taxon>
        <taxon>Euarchontoglires</taxon>
        <taxon>Primates</taxon>
        <taxon>Haplorrhini</taxon>
        <taxon>Catarrhini</taxon>
        <taxon>Cercopithecidae</taxon>
        <taxon>Cercopithecinae</taxon>
        <taxon>Macaca</taxon>
    </lineage>
</organism>
<protein>
    <recommendedName>
        <fullName>Succinate dehydrogenase [ubiquinone] flavoprotein subunit, mitochondrial</fullName>
        <ecNumber evidence="2">1.3.5.1</ecNumber>
    </recommendedName>
    <alternativeName>
        <fullName>Flavoprotein subunit of complex II</fullName>
        <shortName>Fp</shortName>
    </alternativeName>
    <alternativeName>
        <fullName>Malate dehydrogenase [quinone] flavoprotein subunit</fullName>
        <ecNumber evidence="1">1.1.5.-</ecNumber>
    </alternativeName>
</protein>
<evidence type="ECO:0000250" key="1">
    <source>
        <dbReference type="UniProtKB" id="P31039"/>
    </source>
</evidence>
<evidence type="ECO:0000250" key="2">
    <source>
        <dbReference type="UniProtKB" id="P31040"/>
    </source>
</evidence>
<evidence type="ECO:0000250" key="3">
    <source>
        <dbReference type="UniProtKB" id="Q0QF01"/>
    </source>
</evidence>
<evidence type="ECO:0000250" key="4">
    <source>
        <dbReference type="UniProtKB" id="Q8K2B3"/>
    </source>
</evidence>
<evidence type="ECO:0000250" key="5">
    <source>
        <dbReference type="UniProtKB" id="Q9YHT1"/>
    </source>
</evidence>
<evidence type="ECO:0000305" key="6"/>
<accession>Q8HXW3</accession>
<gene>
    <name type="primary">SDHA</name>
    <name type="ORF">QccE-14114</name>
</gene>
<reference key="1">
    <citation type="submission" date="2002-04" db="EMBL/GenBank/DDBJ databases">
        <title>Isolation and characterization of cDNA for macaque neurological disease genes.</title>
        <authorList>
            <person name="Kusuda J."/>
            <person name="Osada N."/>
            <person name="Hida M."/>
            <person name="Sugano S."/>
            <person name="Hashimoto K."/>
        </authorList>
    </citation>
    <scope>NUCLEOTIDE SEQUENCE [LARGE SCALE MRNA]</scope>
    <source>
        <tissue>Brain cortex</tissue>
    </source>
</reference>
<dbReference type="EC" id="1.3.5.1" evidence="2"/>
<dbReference type="EC" id="1.1.5.-" evidence="1"/>
<dbReference type="EMBL" id="AB083328">
    <property type="protein sequence ID" value="BAC20607.1"/>
    <property type="molecule type" value="mRNA"/>
</dbReference>
<dbReference type="SMR" id="Q8HXW3"/>
<dbReference type="STRING" id="9541.ENSMFAP00000011190"/>
<dbReference type="eggNOG" id="KOG2403">
    <property type="taxonomic scope" value="Eukaryota"/>
</dbReference>
<dbReference type="UniPathway" id="UPA00223">
    <property type="reaction ID" value="UER01006"/>
</dbReference>
<dbReference type="Proteomes" id="UP000233100">
    <property type="component" value="Unplaced"/>
</dbReference>
<dbReference type="GO" id="GO:0005743">
    <property type="term" value="C:mitochondrial inner membrane"/>
    <property type="evidence" value="ECO:0000250"/>
    <property type="project" value="UniProtKB"/>
</dbReference>
<dbReference type="GO" id="GO:0005739">
    <property type="term" value="C:mitochondrion"/>
    <property type="evidence" value="ECO:0000250"/>
    <property type="project" value="UniProtKB"/>
</dbReference>
<dbReference type="GO" id="GO:0045273">
    <property type="term" value="C:respiratory chain complex II (succinate dehydrogenase)"/>
    <property type="evidence" value="ECO:0000250"/>
    <property type="project" value="UniProtKB"/>
</dbReference>
<dbReference type="GO" id="GO:0009055">
    <property type="term" value="F:electron transfer activity"/>
    <property type="evidence" value="ECO:0007669"/>
    <property type="project" value="TreeGrafter"/>
</dbReference>
<dbReference type="GO" id="GO:0050660">
    <property type="term" value="F:flavin adenine dinucleotide binding"/>
    <property type="evidence" value="ECO:0007669"/>
    <property type="project" value="InterPro"/>
</dbReference>
<dbReference type="GO" id="GO:0008177">
    <property type="term" value="F:succinate dehydrogenase (quinone) activity"/>
    <property type="evidence" value="ECO:0000250"/>
    <property type="project" value="UniProtKB"/>
</dbReference>
<dbReference type="GO" id="GO:0006121">
    <property type="term" value="P:mitochondrial electron transport, succinate to ubiquinone"/>
    <property type="evidence" value="ECO:0007669"/>
    <property type="project" value="TreeGrafter"/>
</dbReference>
<dbReference type="GO" id="GO:0022904">
    <property type="term" value="P:respiratory electron transport chain"/>
    <property type="evidence" value="ECO:0000250"/>
    <property type="project" value="UniProtKB"/>
</dbReference>
<dbReference type="GO" id="GO:0006105">
    <property type="term" value="P:succinate metabolic process"/>
    <property type="evidence" value="ECO:0000250"/>
    <property type="project" value="UniProtKB"/>
</dbReference>
<dbReference type="GO" id="GO:0006099">
    <property type="term" value="P:tricarboxylic acid cycle"/>
    <property type="evidence" value="ECO:0007669"/>
    <property type="project" value="UniProtKB-UniPathway"/>
</dbReference>
<dbReference type="FunFam" id="3.90.700.10:FF:000001">
    <property type="entry name" value="Mitochondrial succinate dehydrogenase flavoprotein subunit"/>
    <property type="match status" value="1"/>
</dbReference>
<dbReference type="FunFam" id="4.10.80.40:FF:000004">
    <property type="entry name" value="Succinate dehydrogenase [ubiquinone] flavoprotein subunit, mitochondrial"/>
    <property type="match status" value="1"/>
</dbReference>
<dbReference type="FunFam" id="3.50.50.60:FF:000482">
    <property type="entry name" value="Succinate dehydrogenase complex, subunit A, flavoprotein (Fp)"/>
    <property type="match status" value="1"/>
</dbReference>
<dbReference type="FunFam" id="3.50.50.60:FF:001062">
    <property type="entry name" value="Succinate dehydrogenase complex, subunit A, flavoprotein (Fp)"/>
    <property type="match status" value="1"/>
</dbReference>
<dbReference type="FunFam" id="1.20.58.100:FF:000001">
    <property type="entry name" value="Succinate dehydrogenase flavoprotein subunit (SdhA)"/>
    <property type="match status" value="1"/>
</dbReference>
<dbReference type="Gene3D" id="3.50.50.60">
    <property type="entry name" value="FAD/NAD(P)-binding domain"/>
    <property type="match status" value="1"/>
</dbReference>
<dbReference type="Gene3D" id="1.20.58.100">
    <property type="entry name" value="Fumarate reductase/succinate dehydrogenase flavoprotein-like, C-terminal domain"/>
    <property type="match status" value="1"/>
</dbReference>
<dbReference type="Gene3D" id="4.10.80.40">
    <property type="entry name" value="succinate dehydrogenase protein domain"/>
    <property type="match status" value="1"/>
</dbReference>
<dbReference type="Gene3D" id="3.90.700.10">
    <property type="entry name" value="Succinate dehydrogenase/fumarate reductase flavoprotein, catalytic domain"/>
    <property type="match status" value="1"/>
</dbReference>
<dbReference type="InterPro" id="IPR003953">
    <property type="entry name" value="FAD-dep_OxRdtase_2_FAD-bd"/>
</dbReference>
<dbReference type="InterPro" id="IPR036188">
    <property type="entry name" value="FAD/NAD-bd_sf"/>
</dbReference>
<dbReference type="InterPro" id="IPR003952">
    <property type="entry name" value="FRD_SDH_FAD_BS"/>
</dbReference>
<dbReference type="InterPro" id="IPR037099">
    <property type="entry name" value="Fum_R/Succ_DH_flav-like_C_sf"/>
</dbReference>
<dbReference type="InterPro" id="IPR015939">
    <property type="entry name" value="Fum_Rdtase/Succ_DH_flav-like_C"/>
</dbReference>
<dbReference type="InterPro" id="IPR030664">
    <property type="entry name" value="SdhA/FrdA/AprA"/>
</dbReference>
<dbReference type="InterPro" id="IPR027477">
    <property type="entry name" value="Succ_DH/fumarate_Rdtase_cat_sf"/>
</dbReference>
<dbReference type="InterPro" id="IPR011281">
    <property type="entry name" value="Succ_DH_flav_su_fwd"/>
</dbReference>
<dbReference type="InterPro" id="IPR014006">
    <property type="entry name" value="Succ_Dhase_FrdA_Gneg"/>
</dbReference>
<dbReference type="NCBIfam" id="TIGR01816">
    <property type="entry name" value="sdhA_forward"/>
    <property type="match status" value="1"/>
</dbReference>
<dbReference type="NCBIfam" id="TIGR01812">
    <property type="entry name" value="sdhA_frdA_Gneg"/>
    <property type="match status" value="1"/>
</dbReference>
<dbReference type="PANTHER" id="PTHR11632">
    <property type="entry name" value="SUCCINATE DEHYDROGENASE 2 FLAVOPROTEIN SUBUNIT"/>
    <property type="match status" value="1"/>
</dbReference>
<dbReference type="PANTHER" id="PTHR11632:SF51">
    <property type="entry name" value="SUCCINATE DEHYDROGENASE [UBIQUINONE] FLAVOPROTEIN SUBUNIT, MITOCHONDRIAL"/>
    <property type="match status" value="1"/>
</dbReference>
<dbReference type="Pfam" id="PF00890">
    <property type="entry name" value="FAD_binding_2"/>
    <property type="match status" value="1"/>
</dbReference>
<dbReference type="Pfam" id="PF02910">
    <property type="entry name" value="Succ_DH_flav_C"/>
    <property type="match status" value="1"/>
</dbReference>
<dbReference type="PIRSF" id="PIRSF000171">
    <property type="entry name" value="SDHA_APRA_LASPO"/>
    <property type="match status" value="1"/>
</dbReference>
<dbReference type="SUPFAM" id="SSF51905">
    <property type="entry name" value="FAD/NAD(P)-binding domain"/>
    <property type="match status" value="1"/>
</dbReference>
<dbReference type="SUPFAM" id="SSF46977">
    <property type="entry name" value="Succinate dehydrogenase/fumarate reductase flavoprotein C-terminal domain"/>
    <property type="match status" value="1"/>
</dbReference>
<dbReference type="SUPFAM" id="SSF56425">
    <property type="entry name" value="Succinate dehydrogenase/fumarate reductase flavoprotein, catalytic domain"/>
    <property type="match status" value="1"/>
</dbReference>
<dbReference type="PROSITE" id="PS00504">
    <property type="entry name" value="FRD_SDH_FAD_BINDING"/>
    <property type="match status" value="1"/>
</dbReference>
<proteinExistence type="evidence at transcript level"/>
<feature type="transit peptide" description="Mitochondrion" evidence="3">
    <location>
        <begin position="1"/>
        <end position="42"/>
    </location>
</feature>
<feature type="chain" id="PRO_0000010336" description="Succinate dehydrogenase [ubiquinone] flavoprotein subunit, mitochondrial">
    <location>
        <begin position="43"/>
        <end position="664"/>
    </location>
</feature>
<feature type="active site" description="Proton acceptor" evidence="5">
    <location>
        <position position="340"/>
    </location>
</feature>
<feature type="binding site" evidence="2">
    <location>
        <position position="69"/>
    </location>
    <ligand>
        <name>FAD</name>
        <dbReference type="ChEBI" id="CHEBI:57692"/>
    </ligand>
</feature>
<feature type="binding site" evidence="2">
    <location>
        <position position="72"/>
    </location>
    <ligand>
        <name>FAD</name>
        <dbReference type="ChEBI" id="CHEBI:57692"/>
    </ligand>
</feature>
<feature type="binding site" evidence="2">
    <location>
        <position position="91"/>
    </location>
    <ligand>
        <name>FAD</name>
        <dbReference type="ChEBI" id="CHEBI:57692"/>
    </ligand>
</feature>
<feature type="binding site" evidence="2">
    <location>
        <position position="92"/>
    </location>
    <ligand>
        <name>FAD</name>
        <dbReference type="ChEBI" id="CHEBI:57692"/>
    </ligand>
</feature>
<feature type="binding site" evidence="2">
    <location>
        <position position="98"/>
    </location>
    <ligand>
        <name>FAD</name>
        <dbReference type="ChEBI" id="CHEBI:57692"/>
    </ligand>
</feature>
<feature type="binding site" evidence="2">
    <location>
        <position position="100"/>
    </location>
    <ligand>
        <name>FAD</name>
        <dbReference type="ChEBI" id="CHEBI:57692"/>
    </ligand>
</feature>
<feature type="binding site" evidence="2">
    <location>
        <position position="105"/>
    </location>
    <ligand>
        <name>FAD</name>
        <dbReference type="ChEBI" id="CHEBI:57692"/>
    </ligand>
</feature>
<feature type="binding site" evidence="2">
    <location>
        <position position="221"/>
    </location>
    <ligand>
        <name>FAD</name>
        <dbReference type="ChEBI" id="CHEBI:57692"/>
    </ligand>
</feature>
<feature type="binding site" evidence="2">
    <location>
        <position position="275"/>
    </location>
    <ligand>
        <name>FAD</name>
        <dbReference type="ChEBI" id="CHEBI:57692"/>
    </ligand>
</feature>
<feature type="binding site" evidence="2">
    <location>
        <position position="296"/>
    </location>
    <ligand>
        <name>oxaloacetate</name>
        <dbReference type="ChEBI" id="CHEBI:16452"/>
    </ligand>
</feature>
<feature type="binding site" evidence="2">
    <location>
        <position position="340"/>
    </location>
    <ligand>
        <name>oxaloacetate</name>
        <dbReference type="ChEBI" id="CHEBI:16452"/>
    </ligand>
</feature>
<feature type="binding site" evidence="2">
    <location>
        <position position="407"/>
    </location>
    <ligand>
        <name>oxaloacetate</name>
        <dbReference type="ChEBI" id="CHEBI:16452"/>
    </ligand>
</feature>
<feature type="binding site" evidence="2">
    <location>
        <position position="440"/>
    </location>
    <ligand>
        <name>FAD</name>
        <dbReference type="ChEBI" id="CHEBI:57692"/>
    </ligand>
</feature>
<feature type="binding site" evidence="2">
    <location>
        <position position="451"/>
    </location>
    <ligand>
        <name>oxaloacetate</name>
        <dbReference type="ChEBI" id="CHEBI:16452"/>
    </ligand>
</feature>
<feature type="binding site" evidence="2">
    <location>
        <position position="454"/>
    </location>
    <ligand>
        <name>oxaloacetate</name>
        <dbReference type="ChEBI" id="CHEBI:16452"/>
    </ligand>
</feature>
<feature type="binding site" evidence="2">
    <location>
        <position position="456"/>
    </location>
    <ligand>
        <name>FAD</name>
        <dbReference type="ChEBI" id="CHEBI:57692"/>
    </ligand>
</feature>
<feature type="binding site" evidence="2">
    <location>
        <position position="457"/>
    </location>
    <ligand>
        <name>FAD</name>
        <dbReference type="ChEBI" id="CHEBI:57692"/>
    </ligand>
</feature>
<feature type="modified residue" description="Tele-8alpha-FAD histidine" evidence="3">
    <location>
        <position position="99"/>
    </location>
</feature>
<feature type="modified residue" description="N6-acetyllysine" evidence="4">
    <location>
        <position position="167"/>
    </location>
</feature>
<feature type="modified residue" description="N6-acetyllysine; alternate" evidence="2">
    <location>
        <position position="179"/>
    </location>
</feature>
<feature type="modified residue" description="N6-succinyllysine; alternate" evidence="4">
    <location>
        <position position="179"/>
    </location>
</feature>
<feature type="modified residue" description="N6-acetyllysine" evidence="4">
    <location>
        <position position="182"/>
    </location>
</feature>
<feature type="modified residue" description="Phosphotyrosine; by SRC" evidence="2">
    <location>
        <position position="215"/>
    </location>
</feature>
<feature type="modified residue" description="N6-acetyllysine; alternate" evidence="4">
    <location>
        <position position="250"/>
    </location>
</feature>
<feature type="modified residue" description="N6-succinyllysine; alternate" evidence="4">
    <location>
        <position position="250"/>
    </location>
</feature>
<feature type="modified residue" description="N6-acetyllysine; alternate" evidence="2">
    <location>
        <position position="335"/>
    </location>
</feature>
<feature type="modified residue" description="N6-succinyllysine; alternate" evidence="4">
    <location>
        <position position="335"/>
    </location>
</feature>
<feature type="modified residue" description="N6-acetyllysine" evidence="4">
    <location>
        <position position="480"/>
    </location>
</feature>
<feature type="modified residue" description="N6-acetyllysine; alternate" evidence="4">
    <location>
        <position position="485"/>
    </location>
</feature>
<feature type="modified residue" description="N6-succinyllysine; alternate" evidence="4">
    <location>
        <position position="485"/>
    </location>
</feature>
<feature type="modified residue" description="N6-acetyllysine; alternate" evidence="4">
    <location>
        <position position="498"/>
    </location>
</feature>
<feature type="modified residue" description="N6-succinyllysine; alternate" evidence="4">
    <location>
        <position position="498"/>
    </location>
</feature>
<feature type="modified residue" description="N6-acetyllysine" evidence="4">
    <location>
        <position position="517"/>
    </location>
</feature>
<feature type="modified residue" description="N6-acetyllysine; alternate" evidence="4">
    <location>
        <position position="538"/>
    </location>
</feature>
<feature type="modified residue" description="N6-succinyllysine; alternate" evidence="4">
    <location>
        <position position="538"/>
    </location>
</feature>
<feature type="modified residue" description="N6-acetyllysine" evidence="2">
    <location>
        <position position="541"/>
    </location>
</feature>
<feature type="modified residue" description="N6-acetyllysine; alternate" evidence="4">
    <location>
        <position position="547"/>
    </location>
</feature>
<feature type="modified residue" description="N6-succinyllysine; alternate" evidence="4">
    <location>
        <position position="547"/>
    </location>
</feature>
<feature type="modified residue" description="N6-acetyllysine" evidence="4">
    <location>
        <position position="550"/>
    </location>
</feature>
<feature type="modified residue" description="N6-acetyllysine" evidence="4">
    <location>
        <position position="598"/>
    </location>
</feature>
<feature type="modified residue" description="N6-acetyllysine" evidence="2">
    <location>
        <position position="608"/>
    </location>
</feature>
<feature type="modified residue" description="N6-succinyllysine" evidence="4">
    <location>
        <position position="615"/>
    </location>
</feature>
<feature type="modified residue" description="N6-acetyllysine" evidence="4">
    <location>
        <position position="624"/>
    </location>
</feature>
<feature type="modified residue" description="N6-acetyllysine" evidence="4">
    <location>
        <position position="636"/>
    </location>
</feature>
<feature type="modified residue" description="N6-acetyllysine" evidence="4">
    <location>
        <position position="647"/>
    </location>
</feature>